<proteinExistence type="evidence at protein level"/>
<dbReference type="EMBL" id="AC011698">
    <property type="protein sequence ID" value="AAF05856.1"/>
    <property type="molecule type" value="Genomic_DNA"/>
</dbReference>
<dbReference type="EMBL" id="CP002686">
    <property type="protein sequence ID" value="AEE74019.1"/>
    <property type="molecule type" value="Genomic_DNA"/>
</dbReference>
<dbReference type="EMBL" id="CP002686">
    <property type="protein sequence ID" value="AEE74020.1"/>
    <property type="molecule type" value="Genomic_DNA"/>
</dbReference>
<dbReference type="EMBL" id="CP002686">
    <property type="protein sequence ID" value="AEE74021.1"/>
    <property type="molecule type" value="Genomic_DNA"/>
</dbReference>
<dbReference type="EMBL" id="CP002686">
    <property type="protein sequence ID" value="ANM64427.1"/>
    <property type="molecule type" value="Genomic_DNA"/>
</dbReference>
<dbReference type="EMBL" id="CP002686">
    <property type="protein sequence ID" value="ANM64428.1"/>
    <property type="molecule type" value="Genomic_DNA"/>
</dbReference>
<dbReference type="EMBL" id="CP002686">
    <property type="protein sequence ID" value="ANM64429.1"/>
    <property type="molecule type" value="Genomic_DNA"/>
</dbReference>
<dbReference type="EMBL" id="AK117787">
    <property type="protein sequence ID" value="BAC42434.1"/>
    <property type="molecule type" value="mRNA"/>
</dbReference>
<dbReference type="EMBL" id="BT005915">
    <property type="protein sequence ID" value="AAO64850.1"/>
    <property type="molecule type" value="mRNA"/>
</dbReference>
<dbReference type="RefSeq" id="NP_001319464.1">
    <property type="nucleotide sequence ID" value="NM_001337495.1"/>
</dbReference>
<dbReference type="RefSeq" id="NP_001326457.1">
    <property type="nucleotide sequence ID" value="NM_001337497.1"/>
</dbReference>
<dbReference type="RefSeq" id="NP_001326458.1">
    <property type="nucleotide sequence ID" value="NM_001337496.1"/>
</dbReference>
<dbReference type="RefSeq" id="NP_187047.1">
    <property type="nucleotide sequence ID" value="NM_111268.3"/>
</dbReference>
<dbReference type="RefSeq" id="NP_974214.1">
    <property type="nucleotide sequence ID" value="NM_202485.2"/>
</dbReference>
<dbReference type="RefSeq" id="NP_974215.1">
    <property type="nucleotide sequence ID" value="NM_202486.2"/>
</dbReference>
<dbReference type="SMR" id="Q9SQR5"/>
<dbReference type="FunCoup" id="Q9SQR5">
    <property type="interactions" value="26"/>
</dbReference>
<dbReference type="STRING" id="3702.Q9SQR5"/>
<dbReference type="iPTMnet" id="Q9SQR5"/>
<dbReference type="PaxDb" id="3702-AT3G03970.3"/>
<dbReference type="ProteomicsDB" id="232508"/>
<dbReference type="EnsemblPlants" id="AT3G03970.1">
    <property type="protein sequence ID" value="AT3G03970.1"/>
    <property type="gene ID" value="AT3G03970"/>
</dbReference>
<dbReference type="EnsemblPlants" id="AT3G03970.2">
    <property type="protein sequence ID" value="AT3G03970.2"/>
    <property type="gene ID" value="AT3G03970"/>
</dbReference>
<dbReference type="EnsemblPlants" id="AT3G03970.3">
    <property type="protein sequence ID" value="AT3G03970.3"/>
    <property type="gene ID" value="AT3G03970"/>
</dbReference>
<dbReference type="EnsemblPlants" id="AT3G03970.4">
    <property type="protein sequence ID" value="AT3G03970.4"/>
    <property type="gene ID" value="AT3G03970"/>
</dbReference>
<dbReference type="EnsemblPlants" id="AT3G03970.5">
    <property type="protein sequence ID" value="AT3G03970.5"/>
    <property type="gene ID" value="AT3G03970"/>
</dbReference>
<dbReference type="EnsemblPlants" id="AT3G03970.6">
    <property type="protein sequence ID" value="AT3G03970.6"/>
    <property type="gene ID" value="AT3G03970"/>
</dbReference>
<dbReference type="GeneID" id="819552"/>
<dbReference type="Gramene" id="AT3G03970.1">
    <property type="protein sequence ID" value="AT3G03970.1"/>
    <property type="gene ID" value="AT3G03970"/>
</dbReference>
<dbReference type="Gramene" id="AT3G03970.2">
    <property type="protein sequence ID" value="AT3G03970.2"/>
    <property type="gene ID" value="AT3G03970"/>
</dbReference>
<dbReference type="Gramene" id="AT3G03970.3">
    <property type="protein sequence ID" value="AT3G03970.3"/>
    <property type="gene ID" value="AT3G03970"/>
</dbReference>
<dbReference type="Gramene" id="AT3G03970.4">
    <property type="protein sequence ID" value="AT3G03970.4"/>
    <property type="gene ID" value="AT3G03970"/>
</dbReference>
<dbReference type="Gramene" id="AT3G03970.5">
    <property type="protein sequence ID" value="AT3G03970.5"/>
    <property type="gene ID" value="AT3G03970"/>
</dbReference>
<dbReference type="Gramene" id="AT3G03970.6">
    <property type="protein sequence ID" value="AT3G03970.6"/>
    <property type="gene ID" value="AT3G03970"/>
</dbReference>
<dbReference type="KEGG" id="ath:AT3G03970"/>
<dbReference type="Araport" id="AT3G03970"/>
<dbReference type="TAIR" id="AT3G03970">
    <property type="gene designation" value="SINE2"/>
</dbReference>
<dbReference type="eggNOG" id="ENOG502QQPA">
    <property type="taxonomic scope" value="Eukaryota"/>
</dbReference>
<dbReference type="HOGENOM" id="CLU_028938_0_0_1"/>
<dbReference type="InParanoid" id="Q9SQR5"/>
<dbReference type="OMA" id="AKSHMAL"/>
<dbReference type="PhylomeDB" id="Q9SQR5"/>
<dbReference type="PRO" id="PR:Q9SQR5"/>
<dbReference type="Proteomes" id="UP000006548">
    <property type="component" value="Chromosome 3"/>
</dbReference>
<dbReference type="ExpressionAtlas" id="Q9SQR5">
    <property type="expression patterns" value="baseline and differential"/>
</dbReference>
<dbReference type="GO" id="GO:0005874">
    <property type="term" value="C:microtubule"/>
    <property type="evidence" value="ECO:0007669"/>
    <property type="project" value="InterPro"/>
</dbReference>
<dbReference type="GO" id="GO:0005635">
    <property type="term" value="C:nuclear envelope"/>
    <property type="evidence" value="ECO:0000314"/>
    <property type="project" value="TAIR"/>
</dbReference>
<dbReference type="GO" id="GO:0031965">
    <property type="term" value="C:nuclear membrane"/>
    <property type="evidence" value="ECO:0007669"/>
    <property type="project" value="UniProtKB-SubCell"/>
</dbReference>
<dbReference type="GO" id="GO:0008017">
    <property type="term" value="F:microtubule binding"/>
    <property type="evidence" value="ECO:0007669"/>
    <property type="project" value="InterPro"/>
</dbReference>
<dbReference type="GO" id="GO:0061760">
    <property type="term" value="P:antifungal innate immune response"/>
    <property type="evidence" value="ECO:0000315"/>
    <property type="project" value="UniProtKB"/>
</dbReference>
<dbReference type="FunFam" id="1.25.10.10:FF:001168">
    <property type="entry name" value="Binding protein"/>
    <property type="match status" value="1"/>
</dbReference>
<dbReference type="Gene3D" id="1.25.10.10">
    <property type="entry name" value="Leucine-rich Repeat Variant"/>
    <property type="match status" value="1"/>
</dbReference>
<dbReference type="InterPro" id="IPR011989">
    <property type="entry name" value="ARM-like"/>
</dbReference>
<dbReference type="InterPro" id="IPR016024">
    <property type="entry name" value="ARM-type_fold"/>
</dbReference>
<dbReference type="InterPro" id="IPR033337">
    <property type="entry name" value="TORTIFOLIA1/SINE1-2"/>
</dbReference>
<dbReference type="PANTHER" id="PTHR31355">
    <property type="entry name" value="MICROTUBULE-ASSOCIATED PROTEIN TORTIFOLIA1"/>
    <property type="match status" value="1"/>
</dbReference>
<dbReference type="PANTHER" id="PTHR31355:SF4">
    <property type="entry name" value="TOG DOMAIN-CONTAINING PROTEIN"/>
    <property type="match status" value="1"/>
</dbReference>
<dbReference type="Pfam" id="PF24714">
    <property type="entry name" value="TOR1L1_N"/>
    <property type="match status" value="1"/>
</dbReference>
<dbReference type="SUPFAM" id="SSF48371">
    <property type="entry name" value="ARM repeat"/>
    <property type="match status" value="1"/>
</dbReference>
<organism>
    <name type="scientific">Arabidopsis thaliana</name>
    <name type="common">Mouse-ear cress</name>
    <dbReference type="NCBI Taxonomy" id="3702"/>
    <lineage>
        <taxon>Eukaryota</taxon>
        <taxon>Viridiplantae</taxon>
        <taxon>Streptophyta</taxon>
        <taxon>Embryophyta</taxon>
        <taxon>Tracheophyta</taxon>
        <taxon>Spermatophyta</taxon>
        <taxon>Magnoliopsida</taxon>
        <taxon>eudicotyledons</taxon>
        <taxon>Gunneridae</taxon>
        <taxon>Pentapetalae</taxon>
        <taxon>rosids</taxon>
        <taxon>malvids</taxon>
        <taxon>Brassicales</taxon>
        <taxon>Brassicaceae</taxon>
        <taxon>Camelineae</taxon>
        <taxon>Arabidopsis</taxon>
    </lineage>
</organism>
<accession>Q9SQR5</accession>
<reference key="1">
    <citation type="journal article" date="2000" name="Nature">
        <title>Sequence and analysis of chromosome 3 of the plant Arabidopsis thaliana.</title>
        <authorList>
            <person name="Salanoubat M."/>
            <person name="Lemcke K."/>
            <person name="Rieger M."/>
            <person name="Ansorge W."/>
            <person name="Unseld M."/>
            <person name="Fartmann B."/>
            <person name="Valle G."/>
            <person name="Bloecker H."/>
            <person name="Perez-Alonso M."/>
            <person name="Obermaier B."/>
            <person name="Delseny M."/>
            <person name="Boutry M."/>
            <person name="Grivell L.A."/>
            <person name="Mache R."/>
            <person name="Puigdomenech P."/>
            <person name="De Simone V."/>
            <person name="Choisne N."/>
            <person name="Artiguenave F."/>
            <person name="Robert C."/>
            <person name="Brottier P."/>
            <person name="Wincker P."/>
            <person name="Cattolico L."/>
            <person name="Weissenbach J."/>
            <person name="Saurin W."/>
            <person name="Quetier F."/>
            <person name="Schaefer M."/>
            <person name="Mueller-Auer S."/>
            <person name="Gabel C."/>
            <person name="Fuchs M."/>
            <person name="Benes V."/>
            <person name="Wurmbach E."/>
            <person name="Drzonek H."/>
            <person name="Erfle H."/>
            <person name="Jordan N."/>
            <person name="Bangert S."/>
            <person name="Wiedelmann R."/>
            <person name="Kranz H."/>
            <person name="Voss H."/>
            <person name="Holland R."/>
            <person name="Brandt P."/>
            <person name="Nyakatura G."/>
            <person name="Vezzi A."/>
            <person name="D'Angelo M."/>
            <person name="Pallavicini A."/>
            <person name="Toppo S."/>
            <person name="Simionati B."/>
            <person name="Conrad A."/>
            <person name="Hornischer K."/>
            <person name="Kauer G."/>
            <person name="Loehnert T.-H."/>
            <person name="Nordsiek G."/>
            <person name="Reichelt J."/>
            <person name="Scharfe M."/>
            <person name="Schoen O."/>
            <person name="Bargues M."/>
            <person name="Terol J."/>
            <person name="Climent J."/>
            <person name="Navarro P."/>
            <person name="Collado C."/>
            <person name="Perez-Perez A."/>
            <person name="Ottenwaelder B."/>
            <person name="Duchemin D."/>
            <person name="Cooke R."/>
            <person name="Laudie M."/>
            <person name="Berger-Llauro C."/>
            <person name="Purnelle B."/>
            <person name="Masuy D."/>
            <person name="de Haan M."/>
            <person name="Maarse A.C."/>
            <person name="Alcaraz J.-P."/>
            <person name="Cottet A."/>
            <person name="Casacuberta E."/>
            <person name="Monfort A."/>
            <person name="Argiriou A."/>
            <person name="Flores M."/>
            <person name="Liguori R."/>
            <person name="Vitale D."/>
            <person name="Mannhaupt G."/>
            <person name="Haase D."/>
            <person name="Schoof H."/>
            <person name="Rudd S."/>
            <person name="Zaccaria P."/>
            <person name="Mewes H.-W."/>
            <person name="Mayer K.F.X."/>
            <person name="Kaul S."/>
            <person name="Town C.D."/>
            <person name="Koo H.L."/>
            <person name="Tallon L.J."/>
            <person name="Jenkins J."/>
            <person name="Rooney T."/>
            <person name="Rizzo M."/>
            <person name="Walts A."/>
            <person name="Utterback T."/>
            <person name="Fujii C.Y."/>
            <person name="Shea T.P."/>
            <person name="Creasy T.H."/>
            <person name="Haas B."/>
            <person name="Maiti R."/>
            <person name="Wu D."/>
            <person name="Peterson J."/>
            <person name="Van Aken S."/>
            <person name="Pai G."/>
            <person name="Militscher J."/>
            <person name="Sellers P."/>
            <person name="Gill J.E."/>
            <person name="Feldblyum T.V."/>
            <person name="Preuss D."/>
            <person name="Lin X."/>
            <person name="Nierman W.C."/>
            <person name="Salzberg S.L."/>
            <person name="White O."/>
            <person name="Venter J.C."/>
            <person name="Fraser C.M."/>
            <person name="Kaneko T."/>
            <person name="Nakamura Y."/>
            <person name="Sato S."/>
            <person name="Kato T."/>
            <person name="Asamizu E."/>
            <person name="Sasamoto S."/>
            <person name="Kimura T."/>
            <person name="Idesawa K."/>
            <person name="Kawashima K."/>
            <person name="Kishida Y."/>
            <person name="Kiyokawa C."/>
            <person name="Kohara M."/>
            <person name="Matsumoto M."/>
            <person name="Matsuno A."/>
            <person name="Muraki A."/>
            <person name="Nakayama S."/>
            <person name="Nakazaki N."/>
            <person name="Shinpo S."/>
            <person name="Takeuchi C."/>
            <person name="Wada T."/>
            <person name="Watanabe A."/>
            <person name="Yamada M."/>
            <person name="Yasuda M."/>
            <person name="Tabata S."/>
        </authorList>
    </citation>
    <scope>NUCLEOTIDE SEQUENCE [LARGE SCALE GENOMIC DNA]</scope>
    <source>
        <strain>cv. Columbia</strain>
    </source>
</reference>
<reference key="2">
    <citation type="journal article" date="2017" name="Plant J.">
        <title>Araport11: a complete reannotation of the Arabidopsis thaliana reference genome.</title>
        <authorList>
            <person name="Cheng C.Y."/>
            <person name="Krishnakumar V."/>
            <person name="Chan A.P."/>
            <person name="Thibaud-Nissen F."/>
            <person name="Schobel S."/>
            <person name="Town C.D."/>
        </authorList>
    </citation>
    <scope>GENOME REANNOTATION</scope>
    <source>
        <strain>cv. Columbia</strain>
    </source>
</reference>
<reference key="3">
    <citation type="journal article" date="2002" name="Science">
        <title>Functional annotation of a full-length Arabidopsis cDNA collection.</title>
        <authorList>
            <person name="Seki M."/>
            <person name="Narusaka M."/>
            <person name="Kamiya A."/>
            <person name="Ishida J."/>
            <person name="Satou M."/>
            <person name="Sakurai T."/>
            <person name="Nakajima M."/>
            <person name="Enju A."/>
            <person name="Akiyama K."/>
            <person name="Oono Y."/>
            <person name="Muramatsu M."/>
            <person name="Hayashizaki Y."/>
            <person name="Kawai J."/>
            <person name="Carninci P."/>
            <person name="Itoh M."/>
            <person name="Ishii Y."/>
            <person name="Arakawa T."/>
            <person name="Shibata K."/>
            <person name="Shinagawa A."/>
            <person name="Shinozaki K."/>
        </authorList>
    </citation>
    <scope>NUCLEOTIDE SEQUENCE [LARGE SCALE MRNA]</scope>
    <source>
        <strain>cv. Columbia</strain>
    </source>
</reference>
<reference key="4">
    <citation type="journal article" date="2003" name="Science">
        <title>Empirical analysis of transcriptional activity in the Arabidopsis genome.</title>
        <authorList>
            <person name="Yamada K."/>
            <person name="Lim J."/>
            <person name="Dale J.M."/>
            <person name="Chen H."/>
            <person name="Shinn P."/>
            <person name="Palm C.J."/>
            <person name="Southwick A.M."/>
            <person name="Wu H.C."/>
            <person name="Kim C.J."/>
            <person name="Nguyen M."/>
            <person name="Pham P.K."/>
            <person name="Cheuk R.F."/>
            <person name="Karlin-Newmann G."/>
            <person name="Liu S.X."/>
            <person name="Lam B."/>
            <person name="Sakano H."/>
            <person name="Wu T."/>
            <person name="Yu G."/>
            <person name="Miranda M."/>
            <person name="Quach H.L."/>
            <person name="Tripp M."/>
            <person name="Chang C.H."/>
            <person name="Lee J.M."/>
            <person name="Toriumi M.J."/>
            <person name="Chan M.M."/>
            <person name="Tang C.C."/>
            <person name="Onodera C.S."/>
            <person name="Deng J.M."/>
            <person name="Akiyama K."/>
            <person name="Ansari Y."/>
            <person name="Arakawa T."/>
            <person name="Banh J."/>
            <person name="Banno F."/>
            <person name="Bowser L."/>
            <person name="Brooks S.Y."/>
            <person name="Carninci P."/>
            <person name="Chao Q."/>
            <person name="Choy N."/>
            <person name="Enju A."/>
            <person name="Goldsmith A.D."/>
            <person name="Gurjal M."/>
            <person name="Hansen N.F."/>
            <person name="Hayashizaki Y."/>
            <person name="Johnson-Hopson C."/>
            <person name="Hsuan V.W."/>
            <person name="Iida K."/>
            <person name="Karnes M."/>
            <person name="Khan S."/>
            <person name="Koesema E."/>
            <person name="Ishida J."/>
            <person name="Jiang P.X."/>
            <person name="Jones T."/>
            <person name="Kawai J."/>
            <person name="Kamiya A."/>
            <person name="Meyers C."/>
            <person name="Nakajima M."/>
            <person name="Narusaka M."/>
            <person name="Seki M."/>
            <person name="Sakurai T."/>
            <person name="Satou M."/>
            <person name="Tamse R."/>
            <person name="Vaysberg M."/>
            <person name="Wallender E.K."/>
            <person name="Wong C."/>
            <person name="Yamamura Y."/>
            <person name="Yuan S."/>
            <person name="Shinozaki K."/>
            <person name="Davis R.W."/>
            <person name="Theologis A."/>
            <person name="Ecker J.R."/>
        </authorList>
    </citation>
    <scope>NUCLEOTIDE SEQUENCE [LARGE SCALE MRNA]</scope>
    <source>
        <strain>cv. Columbia</strain>
    </source>
</reference>
<reference key="5">
    <citation type="journal article" date="2014" name="J. Cell Biol.">
        <title>Identification of unique SUN-interacting nuclear envelope proteins with diverse functions in plants.</title>
        <authorList>
            <person name="Zhou X."/>
            <person name="Graumann K."/>
            <person name="Wirthmueller L."/>
            <person name="Jones J.D."/>
            <person name="Meier I."/>
        </authorList>
    </citation>
    <scope>GENE FAMILY</scope>
    <scope>NOMENCLATURE</scope>
    <scope>SUBCELLULAR LOCATION</scope>
    <scope>INTERACTION WITH SINE1 AND SINE2</scope>
    <scope>TISSUE SPECIFICITY</scope>
    <scope>DISRUPTION PHENOTYPE</scope>
    <scope>FUNCTION</scope>
</reference>
<reference key="6">
    <citation type="journal article" date="2015" name="J. Exp. Bot.">
        <title>The plant nuclear envelope as a multifunctional platform LINCed by SUN and KASH.</title>
        <authorList>
            <person name="Zhou X."/>
            <person name="Graumann K."/>
            <person name="Meier I."/>
        </authorList>
    </citation>
    <scope>REVIEW</scope>
</reference>
<gene>
    <name evidence="4" type="primary">SINE2</name>
    <name evidence="6" type="ordered locus">At3g03970</name>
    <name evidence="7" type="ORF">T11I18.8</name>
</gene>
<protein>
    <recommendedName>
        <fullName evidence="4">Protein SINE2</fullName>
    </recommendedName>
</protein>
<sequence length="554" mass="61442">MGRNLGSAFRQELANLDKDPDSHKTAMSNLRSIVKDLDAKVVHVFVAQLSDVKEIGLESGGYTVSLFEDLARAHGVKIAPHIDIIMPAIIRTLSSSEGSLRVQQACSRAVAAMARYGIDPTTPEDKKTNVIHSLCKPLSDSLIDSQHQQHLALGSALCLKSLVDCDNWRSASSEMVNNVCQSLAVALEATSSEAKSHMALVMALSKHNPFTVEAYARLFVKSGLRILDLGVVEGDSQKRLLAIQMLNFLMKNLNPKSISSELELIYQEMEKYQKDQHYVKMAAHETMRQAERLICEADPMFDAENCKPRNSLSGSVKSTSSLREHDGSVYSRQDRSYVNDQDEYDVLFSGVASGRTLVSGSPLVTFGDNNQETGFVIESPRIGDQIQCSGVENGNIESVWFHQRNRSSEFNESVCSRTNRSRSSRRNTKKRQSGDICSKHHRHGFAQDPFTELLDNRQQLLQYSETSSSSSIYDTSGTTTPTNTTEDICEKPKTDLDSEAKLKTVETELDPRLGRSKGVLKLGLSVFSIAVAGFASFMWMYLQDDMMPPHLVPT</sequence>
<name>SINE2_ARATH</name>
<evidence type="ECO:0000255" key="1"/>
<evidence type="ECO:0000256" key="2">
    <source>
        <dbReference type="SAM" id="MobiDB-lite"/>
    </source>
</evidence>
<evidence type="ECO:0000269" key="3">
    <source>
    </source>
</evidence>
<evidence type="ECO:0000303" key="4">
    <source>
    </source>
</evidence>
<evidence type="ECO:0000305" key="5">
    <source>
    </source>
</evidence>
<evidence type="ECO:0000312" key="6">
    <source>
        <dbReference type="Araport" id="AT3G03970"/>
    </source>
</evidence>
<evidence type="ECO:0000312" key="7">
    <source>
        <dbReference type="EMBL" id="AAF05856.1"/>
    </source>
</evidence>
<feature type="chain" id="PRO_0000441682" description="Protein SINE2">
    <location>
        <begin position="1"/>
        <end position="554"/>
    </location>
</feature>
<feature type="transmembrane region" description="Helical" evidence="1">
    <location>
        <begin position="522"/>
        <end position="542"/>
    </location>
</feature>
<feature type="domain" description="KASH" evidence="5">
    <location>
        <begin position="509"/>
        <end position="554"/>
    </location>
</feature>
<feature type="region of interest" description="ARMADILLO-type fold" evidence="1">
    <location>
        <begin position="17"/>
        <end position="290"/>
    </location>
</feature>
<feature type="region of interest" description="Disordered" evidence="2">
    <location>
        <begin position="306"/>
        <end position="332"/>
    </location>
</feature>
<feature type="region of interest" description="Disordered" evidence="2">
    <location>
        <begin position="411"/>
        <end position="442"/>
    </location>
</feature>
<feature type="region of interest" description="Disordered" evidence="2">
    <location>
        <begin position="465"/>
        <end position="487"/>
    </location>
</feature>
<feature type="short sequence motif" description="Required for nuclear localization" evidence="3">
    <location>
        <begin position="551"/>
        <end position="554"/>
    </location>
</feature>
<feature type="compositionally biased region" description="Low complexity" evidence="2">
    <location>
        <begin position="311"/>
        <end position="321"/>
    </location>
</feature>
<feature type="compositionally biased region" description="Basic and acidic residues" evidence="2">
    <location>
        <begin position="322"/>
        <end position="332"/>
    </location>
</feature>
<feature type="compositionally biased region" description="Basic residues" evidence="2">
    <location>
        <begin position="419"/>
        <end position="431"/>
    </location>
</feature>
<feature type="compositionally biased region" description="Low complexity" evidence="2">
    <location>
        <begin position="465"/>
        <end position="485"/>
    </location>
</feature>
<keyword id="KW-0391">Immunity</keyword>
<keyword id="KW-0399">Innate immunity</keyword>
<keyword id="KW-0472">Membrane</keyword>
<keyword id="KW-0539">Nucleus</keyword>
<keyword id="KW-1185">Reference proteome</keyword>
<keyword id="KW-0812">Transmembrane</keyword>
<keyword id="KW-1133">Transmembrane helix</keyword>
<comment type="function">
    <text evidence="3">Plays a role in innate immunity against the oomycete pathogen A.arabidopsidis (Hpa).</text>
</comment>
<comment type="subunit">
    <text evidence="3">Interacts with SUN1 and SUN2.</text>
</comment>
<comment type="subcellular location">
    <subcellularLocation>
        <location evidence="3">Nucleus membrane</location>
        <topology evidence="1">Single-pass membrane protein</topology>
    </subcellularLocation>
</comment>
<comment type="tissue specificity">
    <text evidence="3">Expressed in epidermal cells, mesophyll cells, trichomes and root cells.</text>
</comment>
<comment type="domain">
    <text evidence="5">The KASH domain, which contains a transmembrane domain, mediates the nuclear envelope targeting and is involved in the binding to the SUN proteins.</text>
</comment>
<comment type="disruption phenotype">
    <text evidence="3">No visible phenotype. More susceptible to the oomycete pathogen H.arabidopsidis (Hpa) infection.</text>
</comment>